<comment type="function">
    <text evidence="1">Catalyzes the transfer of a ribosyl phosphate group from 5-phosphoribose 1-diphosphate to orotate, leading to the formation of orotidine monophosphate (OMP).</text>
</comment>
<comment type="catalytic activity">
    <reaction evidence="1">
        <text>orotidine 5'-phosphate + diphosphate = orotate + 5-phospho-alpha-D-ribose 1-diphosphate</text>
        <dbReference type="Rhea" id="RHEA:10380"/>
        <dbReference type="ChEBI" id="CHEBI:30839"/>
        <dbReference type="ChEBI" id="CHEBI:33019"/>
        <dbReference type="ChEBI" id="CHEBI:57538"/>
        <dbReference type="ChEBI" id="CHEBI:58017"/>
        <dbReference type="EC" id="2.4.2.10"/>
    </reaction>
</comment>
<comment type="cofactor">
    <cofactor evidence="1">
        <name>Mg(2+)</name>
        <dbReference type="ChEBI" id="CHEBI:18420"/>
    </cofactor>
</comment>
<comment type="pathway">
    <text evidence="1">Pyrimidine metabolism; UMP biosynthesis via de novo pathway; UMP from orotate: step 1/2.</text>
</comment>
<comment type="subunit">
    <text evidence="1">Homodimer.</text>
</comment>
<comment type="similarity">
    <text evidence="1">Belongs to the purine/pyrimidine phosphoribosyltransferase family. PyrE subfamily.</text>
</comment>
<proteinExistence type="inferred from homology"/>
<feature type="chain" id="PRO_1000138776" description="Orotate phosphoribosyltransferase">
    <location>
        <begin position="1"/>
        <end position="224"/>
    </location>
</feature>
<feature type="binding site" description="in other chain" evidence="1">
    <location>
        <position position="26"/>
    </location>
    <ligand>
        <name>5-phospho-alpha-D-ribose 1-diphosphate</name>
        <dbReference type="ChEBI" id="CHEBI:58017"/>
        <note>ligand shared between dimeric partners</note>
    </ligand>
</feature>
<feature type="binding site" description="in other chain" evidence="1">
    <location>
        <begin position="73"/>
        <end position="74"/>
    </location>
    <ligand>
        <name>5-phospho-alpha-D-ribose 1-diphosphate</name>
        <dbReference type="ChEBI" id="CHEBI:58017"/>
        <note>ligand shared between dimeric partners</note>
    </ligand>
</feature>
<feature type="binding site" evidence="1">
    <location>
        <position position="100"/>
    </location>
    <ligand>
        <name>5-phospho-alpha-D-ribose 1-diphosphate</name>
        <dbReference type="ChEBI" id="CHEBI:58017"/>
        <note>ligand shared between dimeric partners</note>
    </ligand>
</feature>
<feature type="binding site" description="in other chain" evidence="1">
    <location>
        <position position="101"/>
    </location>
    <ligand>
        <name>5-phospho-alpha-D-ribose 1-diphosphate</name>
        <dbReference type="ChEBI" id="CHEBI:58017"/>
        <note>ligand shared between dimeric partners</note>
    </ligand>
</feature>
<feature type="binding site" evidence="1">
    <location>
        <position position="104"/>
    </location>
    <ligand>
        <name>5-phospho-alpha-D-ribose 1-diphosphate</name>
        <dbReference type="ChEBI" id="CHEBI:58017"/>
        <note>ligand shared between dimeric partners</note>
    </ligand>
</feature>
<feature type="binding site" evidence="1">
    <location>
        <position position="106"/>
    </location>
    <ligand>
        <name>5-phospho-alpha-D-ribose 1-diphosphate</name>
        <dbReference type="ChEBI" id="CHEBI:58017"/>
        <note>ligand shared between dimeric partners</note>
    </ligand>
</feature>
<feature type="binding site" description="in other chain" evidence="1">
    <location>
        <begin position="127"/>
        <end position="135"/>
    </location>
    <ligand>
        <name>5-phospho-alpha-D-ribose 1-diphosphate</name>
        <dbReference type="ChEBI" id="CHEBI:58017"/>
        <note>ligand shared between dimeric partners</note>
    </ligand>
</feature>
<feature type="binding site" evidence="1">
    <location>
        <position position="131"/>
    </location>
    <ligand>
        <name>orotate</name>
        <dbReference type="ChEBI" id="CHEBI:30839"/>
    </ligand>
</feature>
<feature type="binding site" evidence="1">
    <location>
        <position position="160"/>
    </location>
    <ligand>
        <name>orotate</name>
        <dbReference type="ChEBI" id="CHEBI:30839"/>
    </ligand>
</feature>
<keyword id="KW-0328">Glycosyltransferase</keyword>
<keyword id="KW-0460">Magnesium</keyword>
<keyword id="KW-0665">Pyrimidine biosynthesis</keyword>
<keyword id="KW-0808">Transferase</keyword>
<protein>
    <recommendedName>
        <fullName evidence="1">Orotate phosphoribosyltransferase</fullName>
        <shortName evidence="1">OPRT</shortName>
        <shortName evidence="1">OPRTase</shortName>
        <ecNumber evidence="1">2.4.2.10</ecNumber>
    </recommendedName>
</protein>
<name>PYRE_CLOBA</name>
<organism>
    <name type="scientific">Clostridium botulinum (strain Alaska E43 / Type E3)</name>
    <dbReference type="NCBI Taxonomy" id="508767"/>
    <lineage>
        <taxon>Bacteria</taxon>
        <taxon>Bacillati</taxon>
        <taxon>Bacillota</taxon>
        <taxon>Clostridia</taxon>
        <taxon>Eubacteriales</taxon>
        <taxon>Clostridiaceae</taxon>
        <taxon>Clostridium</taxon>
    </lineage>
</organism>
<dbReference type="EC" id="2.4.2.10" evidence="1"/>
<dbReference type="EMBL" id="CP001078">
    <property type="protein sequence ID" value="ACD52869.1"/>
    <property type="molecule type" value="Genomic_DNA"/>
</dbReference>
<dbReference type="RefSeq" id="WP_012450910.1">
    <property type="nucleotide sequence ID" value="NC_010723.1"/>
</dbReference>
<dbReference type="SMR" id="B2UW87"/>
<dbReference type="KEGG" id="cbt:CLH_2341"/>
<dbReference type="HOGENOM" id="CLU_074878_0_1_9"/>
<dbReference type="UniPathway" id="UPA00070">
    <property type="reaction ID" value="UER00119"/>
</dbReference>
<dbReference type="GO" id="GO:0005737">
    <property type="term" value="C:cytoplasm"/>
    <property type="evidence" value="ECO:0007669"/>
    <property type="project" value="TreeGrafter"/>
</dbReference>
<dbReference type="GO" id="GO:0000287">
    <property type="term" value="F:magnesium ion binding"/>
    <property type="evidence" value="ECO:0007669"/>
    <property type="project" value="UniProtKB-UniRule"/>
</dbReference>
<dbReference type="GO" id="GO:0004588">
    <property type="term" value="F:orotate phosphoribosyltransferase activity"/>
    <property type="evidence" value="ECO:0007669"/>
    <property type="project" value="UniProtKB-UniRule"/>
</dbReference>
<dbReference type="GO" id="GO:0006207">
    <property type="term" value="P:'de novo' pyrimidine nucleobase biosynthetic process"/>
    <property type="evidence" value="ECO:0007669"/>
    <property type="project" value="TreeGrafter"/>
</dbReference>
<dbReference type="GO" id="GO:0044205">
    <property type="term" value="P:'de novo' UMP biosynthetic process"/>
    <property type="evidence" value="ECO:0007669"/>
    <property type="project" value="UniProtKB-UniRule"/>
</dbReference>
<dbReference type="GO" id="GO:0046132">
    <property type="term" value="P:pyrimidine ribonucleoside biosynthetic process"/>
    <property type="evidence" value="ECO:0007669"/>
    <property type="project" value="TreeGrafter"/>
</dbReference>
<dbReference type="CDD" id="cd06223">
    <property type="entry name" value="PRTases_typeI"/>
    <property type="match status" value="1"/>
</dbReference>
<dbReference type="Gene3D" id="3.40.50.2020">
    <property type="match status" value="1"/>
</dbReference>
<dbReference type="HAMAP" id="MF_01208">
    <property type="entry name" value="PyrE"/>
    <property type="match status" value="1"/>
</dbReference>
<dbReference type="InterPro" id="IPR023031">
    <property type="entry name" value="OPRT"/>
</dbReference>
<dbReference type="InterPro" id="IPR004467">
    <property type="entry name" value="Or_phspho_trans_dom"/>
</dbReference>
<dbReference type="InterPro" id="IPR000836">
    <property type="entry name" value="PRibTrfase_dom"/>
</dbReference>
<dbReference type="InterPro" id="IPR029057">
    <property type="entry name" value="PRTase-like"/>
</dbReference>
<dbReference type="NCBIfam" id="TIGR00336">
    <property type="entry name" value="pyrE"/>
    <property type="match status" value="1"/>
</dbReference>
<dbReference type="PANTHER" id="PTHR46683">
    <property type="entry name" value="OROTATE PHOSPHORIBOSYLTRANSFERASE 1-RELATED"/>
    <property type="match status" value="1"/>
</dbReference>
<dbReference type="PANTHER" id="PTHR46683:SF1">
    <property type="entry name" value="OROTATE PHOSPHORIBOSYLTRANSFERASE 1-RELATED"/>
    <property type="match status" value="1"/>
</dbReference>
<dbReference type="Pfam" id="PF00156">
    <property type="entry name" value="Pribosyltran"/>
    <property type="match status" value="1"/>
</dbReference>
<dbReference type="SUPFAM" id="SSF53271">
    <property type="entry name" value="PRTase-like"/>
    <property type="match status" value="1"/>
</dbReference>
<reference key="1">
    <citation type="submission" date="2008-05" db="EMBL/GenBank/DDBJ databases">
        <title>Complete genome sequence of Clostridium botulinum E3 str. Alaska E43.</title>
        <authorList>
            <person name="Brinkac L.M."/>
            <person name="Brown J.L."/>
            <person name="Bruce D."/>
            <person name="Detter C."/>
            <person name="Munk C."/>
            <person name="Smith L.A."/>
            <person name="Smith T.J."/>
            <person name="Sutton G."/>
            <person name="Brettin T.S."/>
        </authorList>
    </citation>
    <scope>NUCLEOTIDE SEQUENCE [LARGE SCALE GENOMIC DNA]</scope>
    <source>
        <strain>Alaska E43 / Type E3</strain>
    </source>
</reference>
<evidence type="ECO:0000255" key="1">
    <source>
        <dbReference type="HAMAP-Rule" id="MF_01208"/>
    </source>
</evidence>
<gene>
    <name evidence="1" type="primary">pyrE</name>
    <name type="ordered locus">CLH_2341</name>
</gene>
<accession>B2UW87</accession>
<sequence length="224" mass="25135">MEAYKKEFIEFMIECGVLTFGDFVTKSGRKTPFFVNTGNYKTGSQLKRLGEYYAEAIKANYKDDYNIVFGPAYKGIPLSVTVTMALSDKYGIDVSYCSNRKEVKDHGDTGILLGSKLNDGDKVLIVEDVTTSGKSIYETMPIIKEQGNVDVVGLVISVNRMEKGQGEKSALVELEEKYGFKSCAIVTMTEVVEYLYNKEVNGKVIINDEIKTRIDEYYKEYGAK</sequence>